<dbReference type="EMBL" id="CU179680">
    <property type="protein sequence ID" value="CAL59327.1"/>
    <property type="molecule type" value="Genomic_DNA"/>
</dbReference>
<dbReference type="RefSeq" id="WP_004024029.1">
    <property type="nucleotide sequence ID" value="NC_009497.1"/>
</dbReference>
<dbReference type="SMR" id="A5IZ68"/>
<dbReference type="STRING" id="347257.MAG6270"/>
<dbReference type="GeneID" id="93358360"/>
<dbReference type="KEGG" id="maa:MAG6270"/>
<dbReference type="HOGENOM" id="CLU_103507_2_2_14"/>
<dbReference type="Proteomes" id="UP000007065">
    <property type="component" value="Chromosome"/>
</dbReference>
<dbReference type="GO" id="GO:0022625">
    <property type="term" value="C:cytosolic large ribosomal subunit"/>
    <property type="evidence" value="ECO:0007669"/>
    <property type="project" value="TreeGrafter"/>
</dbReference>
<dbReference type="GO" id="GO:0003735">
    <property type="term" value="F:structural constituent of ribosome"/>
    <property type="evidence" value="ECO:0007669"/>
    <property type="project" value="InterPro"/>
</dbReference>
<dbReference type="GO" id="GO:0006412">
    <property type="term" value="P:translation"/>
    <property type="evidence" value="ECO:0007669"/>
    <property type="project" value="UniProtKB-UniRule"/>
</dbReference>
<dbReference type="FunFam" id="2.30.30.790:FF:000001">
    <property type="entry name" value="50S ribosomal protein L19"/>
    <property type="match status" value="1"/>
</dbReference>
<dbReference type="Gene3D" id="2.30.30.790">
    <property type="match status" value="1"/>
</dbReference>
<dbReference type="HAMAP" id="MF_00402">
    <property type="entry name" value="Ribosomal_bL19"/>
    <property type="match status" value="1"/>
</dbReference>
<dbReference type="InterPro" id="IPR001857">
    <property type="entry name" value="Ribosomal_bL19"/>
</dbReference>
<dbReference type="InterPro" id="IPR018257">
    <property type="entry name" value="Ribosomal_bL19_CS"/>
</dbReference>
<dbReference type="InterPro" id="IPR038657">
    <property type="entry name" value="Ribosomal_bL19_sf"/>
</dbReference>
<dbReference type="InterPro" id="IPR008991">
    <property type="entry name" value="Translation_prot_SH3-like_sf"/>
</dbReference>
<dbReference type="NCBIfam" id="TIGR01024">
    <property type="entry name" value="rplS_bact"/>
    <property type="match status" value="1"/>
</dbReference>
<dbReference type="PANTHER" id="PTHR15680:SF9">
    <property type="entry name" value="LARGE RIBOSOMAL SUBUNIT PROTEIN BL19M"/>
    <property type="match status" value="1"/>
</dbReference>
<dbReference type="PANTHER" id="PTHR15680">
    <property type="entry name" value="RIBOSOMAL PROTEIN L19"/>
    <property type="match status" value="1"/>
</dbReference>
<dbReference type="Pfam" id="PF01245">
    <property type="entry name" value="Ribosomal_L19"/>
    <property type="match status" value="1"/>
</dbReference>
<dbReference type="PIRSF" id="PIRSF002191">
    <property type="entry name" value="Ribosomal_L19"/>
    <property type="match status" value="1"/>
</dbReference>
<dbReference type="PRINTS" id="PR00061">
    <property type="entry name" value="RIBOSOMALL19"/>
</dbReference>
<dbReference type="SUPFAM" id="SSF50104">
    <property type="entry name" value="Translation proteins SH3-like domain"/>
    <property type="match status" value="1"/>
</dbReference>
<dbReference type="PROSITE" id="PS01015">
    <property type="entry name" value="RIBOSOMAL_L19"/>
    <property type="match status" value="1"/>
</dbReference>
<organism>
    <name type="scientific">Mycoplasmopsis agalactiae (strain NCTC 10123 / CIP 59.7 / PG2)</name>
    <name type="common">Mycoplasma agalactiae</name>
    <dbReference type="NCBI Taxonomy" id="347257"/>
    <lineage>
        <taxon>Bacteria</taxon>
        <taxon>Bacillati</taxon>
        <taxon>Mycoplasmatota</taxon>
        <taxon>Mycoplasmoidales</taxon>
        <taxon>Metamycoplasmataceae</taxon>
        <taxon>Mycoplasmopsis</taxon>
    </lineage>
</organism>
<name>RL19_MYCAP</name>
<protein>
    <recommendedName>
        <fullName evidence="1">Large ribosomal subunit protein bL19</fullName>
    </recommendedName>
    <alternativeName>
        <fullName evidence="2">50S ribosomal protein L19</fullName>
    </alternativeName>
</protein>
<evidence type="ECO:0000255" key="1">
    <source>
        <dbReference type="HAMAP-Rule" id="MF_00402"/>
    </source>
</evidence>
<evidence type="ECO:0000305" key="2"/>
<proteinExistence type="inferred from homology"/>
<gene>
    <name evidence="1" type="primary">rplS</name>
    <name type="ordered locus">MAG6270</name>
</gene>
<feature type="chain" id="PRO_1000123344" description="Large ribosomal subunit protein bL19">
    <location>
        <begin position="1"/>
        <end position="116"/>
    </location>
</feature>
<accession>A5IZ68</accession>
<sequence length="116" mass="13454">MRNKLIELVEASQLRTDFPEFRVGDNVRVHVRIREGGKERIQIFEGLVISKKESGTRETFTVRKISFGIGVNRTFPLHSPLISAIEVVRSNKVRRAKLYYMKNRAGKSARLKEIKR</sequence>
<keyword id="KW-1185">Reference proteome</keyword>
<keyword id="KW-0687">Ribonucleoprotein</keyword>
<keyword id="KW-0689">Ribosomal protein</keyword>
<reference key="1">
    <citation type="journal article" date="2007" name="PLoS Genet.">
        <title>Being pathogenic, plastic, and sexual while living with a nearly minimal bacterial genome.</title>
        <authorList>
            <person name="Sirand-Pugnet P."/>
            <person name="Lartigue C."/>
            <person name="Marenda M."/>
            <person name="Jacob D."/>
            <person name="Barre A."/>
            <person name="Barbe V."/>
            <person name="Schenowitz C."/>
            <person name="Mangenot S."/>
            <person name="Couloux A."/>
            <person name="Segurens B."/>
            <person name="de Daruvar A."/>
            <person name="Blanchard A."/>
            <person name="Citti C."/>
        </authorList>
    </citation>
    <scope>NUCLEOTIDE SEQUENCE [LARGE SCALE GENOMIC DNA]</scope>
    <source>
        <strain>NCTC 10123 / CIP 59.7 / PG2</strain>
    </source>
</reference>
<comment type="function">
    <text evidence="1">This protein is located at the 30S-50S ribosomal subunit interface and may play a role in the structure and function of the aminoacyl-tRNA binding site.</text>
</comment>
<comment type="similarity">
    <text evidence="1">Belongs to the bacterial ribosomal protein bL19 family.</text>
</comment>